<evidence type="ECO:0000255" key="1">
    <source>
        <dbReference type="HAMAP-Rule" id="MF_00445"/>
    </source>
</evidence>
<gene>
    <name evidence="1" type="primary">nuoN</name>
    <name type="ordered locus">Pjdr2_5803</name>
</gene>
<feature type="chain" id="PRO_0000391196" description="NADH-quinone oxidoreductase subunit N">
    <location>
        <begin position="1"/>
        <end position="521"/>
    </location>
</feature>
<feature type="transmembrane region" description="Helical" evidence="1">
    <location>
        <begin position="15"/>
        <end position="35"/>
    </location>
</feature>
<feature type="transmembrane region" description="Helical" evidence="1">
    <location>
        <begin position="43"/>
        <end position="63"/>
    </location>
</feature>
<feature type="transmembrane region" description="Helical" evidence="1">
    <location>
        <begin position="98"/>
        <end position="118"/>
    </location>
</feature>
<feature type="transmembrane region" description="Helical" evidence="1">
    <location>
        <begin position="128"/>
        <end position="148"/>
    </location>
</feature>
<feature type="transmembrane region" description="Helical" evidence="1">
    <location>
        <begin position="150"/>
        <end position="170"/>
    </location>
</feature>
<feature type="transmembrane region" description="Helical" evidence="1">
    <location>
        <begin position="185"/>
        <end position="205"/>
    </location>
</feature>
<feature type="transmembrane region" description="Helical" evidence="1">
    <location>
        <begin position="227"/>
        <end position="247"/>
    </location>
</feature>
<feature type="transmembrane region" description="Helical" evidence="1">
    <location>
        <begin position="261"/>
        <end position="281"/>
    </location>
</feature>
<feature type="transmembrane region" description="Helical" evidence="1">
    <location>
        <begin position="303"/>
        <end position="323"/>
    </location>
</feature>
<feature type="transmembrane region" description="Helical" evidence="1">
    <location>
        <begin position="331"/>
        <end position="351"/>
    </location>
</feature>
<feature type="transmembrane region" description="Helical" evidence="1">
    <location>
        <begin position="363"/>
        <end position="383"/>
    </location>
</feature>
<feature type="transmembrane region" description="Helical" evidence="1">
    <location>
        <begin position="406"/>
        <end position="426"/>
    </location>
</feature>
<feature type="transmembrane region" description="Helical" evidence="1">
    <location>
        <begin position="442"/>
        <end position="462"/>
    </location>
</feature>
<feature type="transmembrane region" description="Helical" evidence="1">
    <location>
        <begin position="485"/>
        <end position="505"/>
    </location>
</feature>
<comment type="function">
    <text evidence="1">NDH-1 shuttles electrons from NADH, via FMN and iron-sulfur (Fe-S) centers, to quinones in the respiratory chain. The immediate electron acceptor for the enzyme in this species is believed to be a menaquinone. Couples the redox reaction to proton translocation (for every two electrons transferred, four hydrogen ions are translocated across the cytoplasmic membrane), and thus conserves the redox energy in a proton gradient.</text>
</comment>
<comment type="catalytic activity">
    <reaction evidence="1">
        <text>a quinone + NADH + 5 H(+)(in) = a quinol + NAD(+) + 4 H(+)(out)</text>
        <dbReference type="Rhea" id="RHEA:57888"/>
        <dbReference type="ChEBI" id="CHEBI:15378"/>
        <dbReference type="ChEBI" id="CHEBI:24646"/>
        <dbReference type="ChEBI" id="CHEBI:57540"/>
        <dbReference type="ChEBI" id="CHEBI:57945"/>
        <dbReference type="ChEBI" id="CHEBI:132124"/>
    </reaction>
</comment>
<comment type="subunit">
    <text evidence="1">NDH-1 is composed of 14 different subunits. Subunits NuoA, H, J, K, L, M, N constitute the membrane sector of the complex.</text>
</comment>
<comment type="subcellular location">
    <subcellularLocation>
        <location evidence="1">Cell membrane</location>
        <topology evidence="1">Multi-pass membrane protein</topology>
    </subcellularLocation>
</comment>
<comment type="similarity">
    <text evidence="1">Belongs to the complex I subunit 2 family.</text>
</comment>
<dbReference type="EC" id="7.1.1.-" evidence="1"/>
<dbReference type="EMBL" id="CP001656">
    <property type="protein sequence ID" value="ACT04409.1"/>
    <property type="molecule type" value="Genomic_DNA"/>
</dbReference>
<dbReference type="RefSeq" id="WP_015847345.1">
    <property type="nucleotide sequence ID" value="NC_012914.1"/>
</dbReference>
<dbReference type="SMR" id="C6D5D2"/>
<dbReference type="STRING" id="324057.Pjdr2_5803"/>
<dbReference type="KEGG" id="pjd:Pjdr2_5803"/>
<dbReference type="eggNOG" id="COG1007">
    <property type="taxonomic scope" value="Bacteria"/>
</dbReference>
<dbReference type="HOGENOM" id="CLU_007100_1_1_9"/>
<dbReference type="OrthoDB" id="9811718at2"/>
<dbReference type="GO" id="GO:0005886">
    <property type="term" value="C:plasma membrane"/>
    <property type="evidence" value="ECO:0007669"/>
    <property type="project" value="UniProtKB-SubCell"/>
</dbReference>
<dbReference type="GO" id="GO:0008137">
    <property type="term" value="F:NADH dehydrogenase (ubiquinone) activity"/>
    <property type="evidence" value="ECO:0007669"/>
    <property type="project" value="InterPro"/>
</dbReference>
<dbReference type="GO" id="GO:0050136">
    <property type="term" value="F:NADH:ubiquinone reductase (non-electrogenic) activity"/>
    <property type="evidence" value="ECO:0007669"/>
    <property type="project" value="UniProtKB-UniRule"/>
</dbReference>
<dbReference type="GO" id="GO:0048038">
    <property type="term" value="F:quinone binding"/>
    <property type="evidence" value="ECO:0007669"/>
    <property type="project" value="UniProtKB-KW"/>
</dbReference>
<dbReference type="GO" id="GO:0042773">
    <property type="term" value="P:ATP synthesis coupled electron transport"/>
    <property type="evidence" value="ECO:0007669"/>
    <property type="project" value="InterPro"/>
</dbReference>
<dbReference type="HAMAP" id="MF_00445">
    <property type="entry name" value="NDH1_NuoN_1"/>
    <property type="match status" value="1"/>
</dbReference>
<dbReference type="InterPro" id="IPR010096">
    <property type="entry name" value="NADH-Q_OxRdtase_suN/2"/>
</dbReference>
<dbReference type="InterPro" id="IPR001750">
    <property type="entry name" value="ND/Mrp_TM"/>
</dbReference>
<dbReference type="NCBIfam" id="TIGR01770">
    <property type="entry name" value="NDH_I_N"/>
    <property type="match status" value="1"/>
</dbReference>
<dbReference type="PANTHER" id="PTHR22773">
    <property type="entry name" value="NADH DEHYDROGENASE"/>
    <property type="match status" value="1"/>
</dbReference>
<dbReference type="Pfam" id="PF00361">
    <property type="entry name" value="Proton_antipo_M"/>
    <property type="match status" value="1"/>
</dbReference>
<sequence length="521" mass="55623">MTEFVPLTWHDTLYLAPELILAAMFLILIVTDLILPGRTNRAIIGWLSLAGLLLSLAAVIWRMIDMNPSGVSAAEAAEAGKAISLLGASYRVDDYGNLLKIIFLIGTSLVVLLGLGSTQKDDAVTDKAEFYYLLLPAAAGAMIMASSGNLVTLYIGLELLSITTYVLVGLRKRSSLSAEAAFKYVVTGGIASAFVLFGMSYLYGVTGSVSLADFPTALPQAFTDYKALVYVGFFFLIAGFGIKIAAAPFHIWAADVYQGAPTPVSAFLAVIAKGAALAAVFRFLYSSAFFLTGGPGKQAGDDVFFALLVIAAAAMIAGTVSALRQKQVKRLLALSGVANAGYLLVPIAISVTIIHSNNFSEFVFYLVAYLLMNVGAFAVVTVIARAAGHEELKGFSGLYYRAPWTAAAMLIFILSFSGLPVTAGFFGKLFILLGAASVKAYWLVAIMVVSTVISYYFYFGIIRQMFMRSNGEEEDRIHVPAVTGTVIWICAAATVALGVLPGPLMKWIDAVFTIQADLFVR</sequence>
<accession>C6D5D2</accession>
<protein>
    <recommendedName>
        <fullName evidence="1">NADH-quinone oxidoreductase subunit N</fullName>
        <ecNumber evidence="1">7.1.1.-</ecNumber>
    </recommendedName>
    <alternativeName>
        <fullName evidence="1">NADH dehydrogenase I subunit N</fullName>
    </alternativeName>
    <alternativeName>
        <fullName evidence="1">NDH-1 subunit N</fullName>
    </alternativeName>
</protein>
<keyword id="KW-1003">Cell membrane</keyword>
<keyword id="KW-0472">Membrane</keyword>
<keyword id="KW-0520">NAD</keyword>
<keyword id="KW-0874">Quinone</keyword>
<keyword id="KW-1278">Translocase</keyword>
<keyword id="KW-0812">Transmembrane</keyword>
<keyword id="KW-1133">Transmembrane helix</keyword>
<keyword id="KW-0813">Transport</keyword>
<organism>
    <name type="scientific">Paenibacillus sp. (strain JDR-2)</name>
    <dbReference type="NCBI Taxonomy" id="324057"/>
    <lineage>
        <taxon>Bacteria</taxon>
        <taxon>Bacillati</taxon>
        <taxon>Bacillota</taxon>
        <taxon>Bacilli</taxon>
        <taxon>Bacillales</taxon>
        <taxon>Paenibacillaceae</taxon>
        <taxon>Paenibacillus</taxon>
    </lineage>
</organism>
<proteinExistence type="inferred from homology"/>
<reference key="1">
    <citation type="journal article" date="2012" name="Stand. Genomic Sci.">
        <title>Complete genome sequence of Paenibacillus sp. strain JDR-2.</title>
        <authorList>
            <person name="Chow V."/>
            <person name="Nong G."/>
            <person name="St John F.J."/>
            <person name="Rice J.D."/>
            <person name="Dickstein E."/>
            <person name="Chertkov O."/>
            <person name="Bruce D."/>
            <person name="Detter C."/>
            <person name="Brettin T."/>
            <person name="Han J."/>
            <person name="Woyke T."/>
            <person name="Pitluck S."/>
            <person name="Nolan M."/>
            <person name="Pati A."/>
            <person name="Martin J."/>
            <person name="Copeland A."/>
            <person name="Land M.L."/>
            <person name="Goodwin L."/>
            <person name="Jones J.B."/>
            <person name="Ingram L.O."/>
            <person name="Shanmugam K.T."/>
            <person name="Preston J.F."/>
        </authorList>
    </citation>
    <scope>NUCLEOTIDE SEQUENCE [LARGE SCALE GENOMIC DNA]</scope>
    <source>
        <strain>JDR-2</strain>
    </source>
</reference>
<name>NUON_PAESJ</name>